<feature type="chain" id="PRO_0000276886" description="Small ribosomal subunit protein bS18c">
    <location>
        <begin position="1"/>
        <end position="188"/>
    </location>
</feature>
<feature type="region of interest" description="Disordered" evidence="2">
    <location>
        <begin position="1"/>
        <end position="79"/>
    </location>
</feature>
<feature type="compositionally biased region" description="Low complexity" evidence="2">
    <location>
        <begin position="1"/>
        <end position="19"/>
    </location>
</feature>
<feature type="compositionally biased region" description="Polar residues" evidence="2">
    <location>
        <begin position="25"/>
        <end position="71"/>
    </location>
</feature>
<evidence type="ECO:0000255" key="1">
    <source>
        <dbReference type="HAMAP-Rule" id="MF_00270"/>
    </source>
</evidence>
<evidence type="ECO:0000256" key="2">
    <source>
        <dbReference type="SAM" id="MobiDB-lite"/>
    </source>
</evidence>
<evidence type="ECO:0000305" key="3"/>
<proteinExistence type="inferred from homology"/>
<organism>
    <name type="scientific">Tetradesmus obliquus</name>
    <name type="common">Green alga</name>
    <name type="synonym">Acutodesmus obliquus</name>
    <dbReference type="NCBI Taxonomy" id="3088"/>
    <lineage>
        <taxon>Eukaryota</taxon>
        <taxon>Viridiplantae</taxon>
        <taxon>Chlorophyta</taxon>
        <taxon>core chlorophytes</taxon>
        <taxon>Chlorophyceae</taxon>
        <taxon>CS clade</taxon>
        <taxon>Sphaeropleales</taxon>
        <taxon>Scenedesmaceae</taxon>
        <taxon>Tetradesmus</taxon>
    </lineage>
</organism>
<sequence>MNNQSFNNFSQVNSNSSFFADKPKNLQNTNLEMTNGTNPPSSFSKQTPQKRQSFGTNTNFSKGNSSRGSTSNKRKVLSVSQILARVNQKKQRKLEQKKRKKPLKPIIPPKSFILLFKDKPEKYVYNRRIIDYKHCGLLQRYIGLGGKILPRRQTKLTAKQQRYVAKTIKSARIMGLLPFVTKERSFFR</sequence>
<geneLocation type="chloroplast"/>
<protein>
    <recommendedName>
        <fullName evidence="1">Small ribosomal subunit protein bS18c</fullName>
    </recommendedName>
    <alternativeName>
        <fullName evidence="3">30S ribosomal protein S18, chloroplastic</fullName>
    </alternativeName>
</protein>
<name>RR18_TETOB</name>
<keyword id="KW-0150">Chloroplast</keyword>
<keyword id="KW-0934">Plastid</keyword>
<keyword id="KW-0687">Ribonucleoprotein</keyword>
<keyword id="KW-0689">Ribosomal protein</keyword>
<keyword id="KW-0694">RNA-binding</keyword>
<keyword id="KW-0699">rRNA-binding</keyword>
<accession>Q1KVT1</accession>
<comment type="subunit">
    <text>Part of the 30S ribosomal subunit.</text>
</comment>
<comment type="subcellular location">
    <subcellularLocation>
        <location>Plastid</location>
        <location>Chloroplast</location>
    </subcellularLocation>
</comment>
<comment type="similarity">
    <text evidence="1">Belongs to the bacterial ribosomal protein bS18 family.</text>
</comment>
<dbReference type="EMBL" id="DQ396875">
    <property type="protein sequence ID" value="ABD48276.1"/>
    <property type="molecule type" value="Genomic_DNA"/>
</dbReference>
<dbReference type="RefSeq" id="YP_635993.1">
    <property type="nucleotide sequence ID" value="NC_008101.1"/>
</dbReference>
<dbReference type="GeneID" id="4099782"/>
<dbReference type="GO" id="GO:0009507">
    <property type="term" value="C:chloroplast"/>
    <property type="evidence" value="ECO:0007669"/>
    <property type="project" value="UniProtKB-SubCell"/>
</dbReference>
<dbReference type="GO" id="GO:0005763">
    <property type="term" value="C:mitochondrial small ribosomal subunit"/>
    <property type="evidence" value="ECO:0007669"/>
    <property type="project" value="TreeGrafter"/>
</dbReference>
<dbReference type="GO" id="GO:0070181">
    <property type="term" value="F:small ribosomal subunit rRNA binding"/>
    <property type="evidence" value="ECO:0007669"/>
    <property type="project" value="TreeGrafter"/>
</dbReference>
<dbReference type="GO" id="GO:0003735">
    <property type="term" value="F:structural constituent of ribosome"/>
    <property type="evidence" value="ECO:0007669"/>
    <property type="project" value="InterPro"/>
</dbReference>
<dbReference type="GO" id="GO:0006412">
    <property type="term" value="P:translation"/>
    <property type="evidence" value="ECO:0007669"/>
    <property type="project" value="UniProtKB-UniRule"/>
</dbReference>
<dbReference type="FunFam" id="4.10.640.10:FF:000017">
    <property type="entry name" value="Related to 30s ribosomal protein s18"/>
    <property type="match status" value="1"/>
</dbReference>
<dbReference type="Gene3D" id="4.10.640.10">
    <property type="entry name" value="Ribosomal protein S18"/>
    <property type="match status" value="1"/>
</dbReference>
<dbReference type="HAMAP" id="MF_00270">
    <property type="entry name" value="Ribosomal_bS18"/>
    <property type="match status" value="1"/>
</dbReference>
<dbReference type="InterPro" id="IPR001648">
    <property type="entry name" value="Ribosomal_bS18"/>
</dbReference>
<dbReference type="InterPro" id="IPR036870">
    <property type="entry name" value="Ribosomal_bS18_sf"/>
</dbReference>
<dbReference type="NCBIfam" id="TIGR00165">
    <property type="entry name" value="S18"/>
    <property type="match status" value="1"/>
</dbReference>
<dbReference type="PANTHER" id="PTHR13479">
    <property type="entry name" value="30S RIBOSOMAL PROTEIN S18"/>
    <property type="match status" value="1"/>
</dbReference>
<dbReference type="PANTHER" id="PTHR13479:SF40">
    <property type="entry name" value="SMALL RIBOSOMAL SUBUNIT PROTEIN BS18M"/>
    <property type="match status" value="1"/>
</dbReference>
<dbReference type="Pfam" id="PF01084">
    <property type="entry name" value="Ribosomal_S18"/>
    <property type="match status" value="1"/>
</dbReference>
<dbReference type="PRINTS" id="PR00974">
    <property type="entry name" value="RIBOSOMALS18"/>
</dbReference>
<dbReference type="SUPFAM" id="SSF46911">
    <property type="entry name" value="Ribosomal protein S18"/>
    <property type="match status" value="1"/>
</dbReference>
<gene>
    <name evidence="1" type="primary">rps18</name>
</gene>
<reference key="1">
    <citation type="journal article" date="2006" name="BMC Evol. Biol.">
        <title>The complete chloroplast genome sequence of the chlorophycean green alga Scenedesmus obliquus reveals a compact gene organization and a biased distribution of genes on the two DNA strands.</title>
        <authorList>
            <person name="de Cambiaire J.-C."/>
            <person name="Otis C."/>
            <person name="Lemieux C."/>
            <person name="Turmel M."/>
        </authorList>
    </citation>
    <scope>NUCLEOTIDE SEQUENCE [LARGE SCALE GENOMIC DNA]</scope>
    <source>
        <strain>UTEX 393</strain>
    </source>
</reference>